<protein>
    <recommendedName>
        <fullName evidence="2">Small ribosomal subunit protein uS12</fullName>
    </recommendedName>
    <alternativeName>
        <fullName evidence="4">30S ribosomal protein S12</fullName>
    </alternativeName>
</protein>
<organism>
    <name type="scientific">Legionella pneumophila (strain Paris)</name>
    <dbReference type="NCBI Taxonomy" id="297246"/>
    <lineage>
        <taxon>Bacteria</taxon>
        <taxon>Pseudomonadati</taxon>
        <taxon>Pseudomonadota</taxon>
        <taxon>Gammaproteobacteria</taxon>
        <taxon>Legionellales</taxon>
        <taxon>Legionellaceae</taxon>
        <taxon>Legionella</taxon>
    </lineage>
</organism>
<dbReference type="EMBL" id="CR628336">
    <property type="protein sequence ID" value="CAH11537.1"/>
    <property type="molecule type" value="Genomic_DNA"/>
</dbReference>
<dbReference type="RefSeq" id="WP_004450478.1">
    <property type="nucleotide sequence ID" value="NC_006368.1"/>
</dbReference>
<dbReference type="SMR" id="Q5X864"/>
<dbReference type="GeneID" id="57034327"/>
<dbReference type="KEGG" id="lpp:lpp0389"/>
<dbReference type="LegioList" id="lpp0389"/>
<dbReference type="HOGENOM" id="CLU_104295_1_2_6"/>
<dbReference type="GO" id="GO:0015935">
    <property type="term" value="C:small ribosomal subunit"/>
    <property type="evidence" value="ECO:0007669"/>
    <property type="project" value="InterPro"/>
</dbReference>
<dbReference type="GO" id="GO:0019843">
    <property type="term" value="F:rRNA binding"/>
    <property type="evidence" value="ECO:0007669"/>
    <property type="project" value="UniProtKB-UniRule"/>
</dbReference>
<dbReference type="GO" id="GO:0003735">
    <property type="term" value="F:structural constituent of ribosome"/>
    <property type="evidence" value="ECO:0007669"/>
    <property type="project" value="InterPro"/>
</dbReference>
<dbReference type="GO" id="GO:0000049">
    <property type="term" value="F:tRNA binding"/>
    <property type="evidence" value="ECO:0007669"/>
    <property type="project" value="UniProtKB-UniRule"/>
</dbReference>
<dbReference type="GO" id="GO:0006412">
    <property type="term" value="P:translation"/>
    <property type="evidence" value="ECO:0007669"/>
    <property type="project" value="UniProtKB-UniRule"/>
</dbReference>
<dbReference type="CDD" id="cd03368">
    <property type="entry name" value="Ribosomal_S12"/>
    <property type="match status" value="1"/>
</dbReference>
<dbReference type="FunFam" id="2.40.50.140:FF:000001">
    <property type="entry name" value="30S ribosomal protein S12"/>
    <property type="match status" value="1"/>
</dbReference>
<dbReference type="Gene3D" id="2.40.50.140">
    <property type="entry name" value="Nucleic acid-binding proteins"/>
    <property type="match status" value="1"/>
</dbReference>
<dbReference type="HAMAP" id="MF_00403_B">
    <property type="entry name" value="Ribosomal_uS12_B"/>
    <property type="match status" value="1"/>
</dbReference>
<dbReference type="InterPro" id="IPR012340">
    <property type="entry name" value="NA-bd_OB-fold"/>
</dbReference>
<dbReference type="InterPro" id="IPR006032">
    <property type="entry name" value="Ribosomal_uS12"/>
</dbReference>
<dbReference type="InterPro" id="IPR005679">
    <property type="entry name" value="Ribosomal_uS12_bac"/>
</dbReference>
<dbReference type="NCBIfam" id="TIGR00981">
    <property type="entry name" value="rpsL_bact"/>
    <property type="match status" value="1"/>
</dbReference>
<dbReference type="PANTHER" id="PTHR11652">
    <property type="entry name" value="30S RIBOSOMAL PROTEIN S12 FAMILY MEMBER"/>
    <property type="match status" value="1"/>
</dbReference>
<dbReference type="Pfam" id="PF00164">
    <property type="entry name" value="Ribosom_S12_S23"/>
    <property type="match status" value="1"/>
</dbReference>
<dbReference type="PIRSF" id="PIRSF002133">
    <property type="entry name" value="Ribosomal_S12/S23"/>
    <property type="match status" value="1"/>
</dbReference>
<dbReference type="PRINTS" id="PR01034">
    <property type="entry name" value="RIBOSOMALS12"/>
</dbReference>
<dbReference type="SUPFAM" id="SSF50249">
    <property type="entry name" value="Nucleic acid-binding proteins"/>
    <property type="match status" value="1"/>
</dbReference>
<dbReference type="PROSITE" id="PS00055">
    <property type="entry name" value="RIBOSOMAL_S12"/>
    <property type="match status" value="1"/>
</dbReference>
<comment type="function">
    <text evidence="2">With S4 and S5 plays an important role in translational accuracy.</text>
</comment>
<comment type="function">
    <text evidence="2">Interacts with and stabilizes bases of the 16S rRNA that are involved in tRNA selection in the A site and with the mRNA backbone. Located at the interface of the 30S and 50S subunits, it traverses the body of the 30S subunit contacting proteins on the other side and probably holding the rRNA structure together. The combined cluster of proteins S8, S12 and S17 appears to hold together the shoulder and platform of the 30S subunit.</text>
</comment>
<comment type="subunit">
    <text evidence="2">Part of the 30S ribosomal subunit. Contacts proteins S8 and S17. May interact with IF1 in the 30S initiation complex.</text>
</comment>
<comment type="similarity">
    <text evidence="2">Belongs to the universal ribosomal protein uS12 family.</text>
</comment>
<evidence type="ECO:0000250" key="1"/>
<evidence type="ECO:0000255" key="2">
    <source>
        <dbReference type="HAMAP-Rule" id="MF_00403"/>
    </source>
</evidence>
<evidence type="ECO:0000256" key="3">
    <source>
        <dbReference type="SAM" id="MobiDB-lite"/>
    </source>
</evidence>
<evidence type="ECO:0000305" key="4"/>
<name>RS12_LEGPA</name>
<feature type="chain" id="PRO_0000146241" description="Small ribosomal subunit protein uS12">
    <location>
        <begin position="1"/>
        <end position="126"/>
    </location>
</feature>
<feature type="region of interest" description="Disordered" evidence="3">
    <location>
        <begin position="99"/>
        <end position="126"/>
    </location>
</feature>
<feature type="compositionally biased region" description="Basic residues" evidence="3">
    <location>
        <begin position="113"/>
        <end position="126"/>
    </location>
</feature>
<feature type="modified residue" description="3-methylthioaspartic acid" evidence="1">
    <location>
        <position position="89"/>
    </location>
</feature>
<proteinExistence type="inferred from homology"/>
<accession>Q5X864</accession>
<sequence>MATINQLVRKPRVDVKKKSNVPALESCPQRRGVCTRVYTTTPKKPNSAMRKVARVRLTNGFEVTSYIGGEGHNLQEHSVVLIRGGRVKDLPGVRYHTVRGSLDTSGVNDRKQGRSKYGTKKPKDKK</sequence>
<keyword id="KW-0488">Methylation</keyword>
<keyword id="KW-0687">Ribonucleoprotein</keyword>
<keyword id="KW-0689">Ribosomal protein</keyword>
<keyword id="KW-0694">RNA-binding</keyword>
<keyword id="KW-0699">rRNA-binding</keyword>
<keyword id="KW-0820">tRNA-binding</keyword>
<gene>
    <name evidence="2" type="primary">rpsL</name>
    <name type="ordered locus">lpp0389</name>
</gene>
<reference key="1">
    <citation type="journal article" date="2004" name="Nat. Genet.">
        <title>Evidence in the Legionella pneumophila genome for exploitation of host cell functions and high genome plasticity.</title>
        <authorList>
            <person name="Cazalet C."/>
            <person name="Rusniok C."/>
            <person name="Brueggemann H."/>
            <person name="Zidane N."/>
            <person name="Magnier A."/>
            <person name="Ma L."/>
            <person name="Tichit M."/>
            <person name="Jarraud S."/>
            <person name="Bouchier C."/>
            <person name="Vandenesch F."/>
            <person name="Kunst F."/>
            <person name="Etienne J."/>
            <person name="Glaser P."/>
            <person name="Buchrieser C."/>
        </authorList>
    </citation>
    <scope>NUCLEOTIDE SEQUENCE [LARGE SCALE GENOMIC DNA]</scope>
    <source>
        <strain>Paris</strain>
    </source>
</reference>